<keyword id="KW-0025">Alternative splicing</keyword>
<keyword id="KW-0963">Cytoplasm</keyword>
<keyword id="KW-0479">Metal-binding</keyword>
<keyword id="KW-0507">mRNA processing</keyword>
<keyword id="KW-0508">mRNA splicing</keyword>
<keyword id="KW-0539">Nucleus</keyword>
<keyword id="KW-1185">Reference proteome</keyword>
<keyword id="KW-0677">Repeat</keyword>
<keyword id="KW-0694">RNA-binding</keyword>
<keyword id="KW-0862">Zinc</keyword>
<keyword id="KW-0863">Zinc-finger</keyword>
<proteinExistence type="evidence at transcript level"/>
<dbReference type="EMBL" id="CR858267">
    <property type="protein sequence ID" value="CAH90504.1"/>
    <property type="molecule type" value="mRNA"/>
</dbReference>
<dbReference type="EMBL" id="CR858673">
    <property type="protein sequence ID" value="CAH90885.1"/>
    <property type="molecule type" value="mRNA"/>
</dbReference>
<dbReference type="EMBL" id="CR860190">
    <property type="protein sequence ID" value="CAH92332.1"/>
    <property type="molecule type" value="mRNA"/>
</dbReference>
<dbReference type="EMBL" id="CR861294">
    <property type="protein sequence ID" value="CAH93361.1"/>
    <property type="molecule type" value="mRNA"/>
</dbReference>
<dbReference type="RefSeq" id="NP_001126370.1">
    <property type="nucleotide sequence ID" value="NM_001132898.1"/>
</dbReference>
<dbReference type="RefSeq" id="NP_001128790.1">
    <property type="nucleotide sequence ID" value="NM_001135318.1"/>
</dbReference>
<dbReference type="SMR" id="Q5R4F5"/>
<dbReference type="FunCoup" id="Q5R4F5">
    <property type="interactions" value="2282"/>
</dbReference>
<dbReference type="STRING" id="9601.ENSPPYP00000006216"/>
<dbReference type="Ensembl" id="ENSPPYT00000006462.3">
    <molecule id="Q5R4F5-1"/>
    <property type="protein sequence ID" value="ENSPPYP00000006216.3"/>
    <property type="gene ID" value="ENSPPYG00000005456.3"/>
</dbReference>
<dbReference type="GeneID" id="100173351"/>
<dbReference type="KEGG" id="pon:100173351"/>
<dbReference type="CTD" id="10150"/>
<dbReference type="eggNOG" id="KOG2494">
    <property type="taxonomic scope" value="Eukaryota"/>
</dbReference>
<dbReference type="GeneTree" id="ENSGT00950000182897"/>
<dbReference type="InParanoid" id="Q5R4F5"/>
<dbReference type="OrthoDB" id="6285980at2759"/>
<dbReference type="Proteomes" id="UP000001595">
    <property type="component" value="Chromosome 13"/>
</dbReference>
<dbReference type="GO" id="GO:0005737">
    <property type="term" value="C:cytoplasm"/>
    <property type="evidence" value="ECO:0007669"/>
    <property type="project" value="UniProtKB-SubCell"/>
</dbReference>
<dbReference type="GO" id="GO:0005654">
    <property type="term" value="C:nucleoplasm"/>
    <property type="evidence" value="ECO:0007669"/>
    <property type="project" value="TreeGrafter"/>
</dbReference>
<dbReference type="GO" id="GO:0003723">
    <property type="term" value="F:RNA binding"/>
    <property type="evidence" value="ECO:0007669"/>
    <property type="project" value="UniProtKB-KW"/>
</dbReference>
<dbReference type="GO" id="GO:0008270">
    <property type="term" value="F:zinc ion binding"/>
    <property type="evidence" value="ECO:0007669"/>
    <property type="project" value="UniProtKB-KW"/>
</dbReference>
<dbReference type="GO" id="GO:0006397">
    <property type="term" value="P:mRNA processing"/>
    <property type="evidence" value="ECO:0007669"/>
    <property type="project" value="UniProtKB-KW"/>
</dbReference>
<dbReference type="GO" id="GO:0043484">
    <property type="term" value="P:regulation of RNA splicing"/>
    <property type="evidence" value="ECO:0000250"/>
    <property type="project" value="UniProtKB"/>
</dbReference>
<dbReference type="GO" id="GO:0008380">
    <property type="term" value="P:RNA splicing"/>
    <property type="evidence" value="ECO:0007669"/>
    <property type="project" value="UniProtKB-KW"/>
</dbReference>
<dbReference type="FunFam" id="3.30.1370.210:FF:000004">
    <property type="entry name" value="Muscleblind like splicing regulator 1"/>
    <property type="match status" value="1"/>
</dbReference>
<dbReference type="FunFam" id="3.30.1370.210:FF:000002">
    <property type="entry name" value="Muscleblind-like 1 isoform 2"/>
    <property type="match status" value="1"/>
</dbReference>
<dbReference type="Gene3D" id="3.30.1370.210">
    <property type="match status" value="2"/>
</dbReference>
<dbReference type="InterPro" id="IPR054429">
    <property type="entry name" value="Znf-CCCH_Muscleblind-like"/>
</dbReference>
<dbReference type="InterPro" id="IPR000571">
    <property type="entry name" value="Znf_CCCH"/>
</dbReference>
<dbReference type="PANTHER" id="PTHR12675">
    <property type="entry name" value="MUSCLEBLIND-LIKE PROTEIN"/>
    <property type="match status" value="1"/>
</dbReference>
<dbReference type="PANTHER" id="PTHR12675:SF4">
    <property type="entry name" value="MUSCLEBLIND-LIKE PROTEIN 2"/>
    <property type="match status" value="1"/>
</dbReference>
<dbReference type="Pfam" id="PF00642">
    <property type="entry name" value="zf-CCCH"/>
    <property type="match status" value="2"/>
</dbReference>
<dbReference type="Pfam" id="PF22628">
    <property type="entry name" value="zf-CCCH_10"/>
    <property type="match status" value="2"/>
</dbReference>
<dbReference type="SMART" id="SM00356">
    <property type="entry name" value="ZnF_C3H1"/>
    <property type="match status" value="4"/>
</dbReference>
<dbReference type="PROSITE" id="PS50103">
    <property type="entry name" value="ZF_C3H1"/>
    <property type="match status" value="4"/>
</dbReference>
<sequence>MALNVAPVRDTKWLTLEVCRQFQRGTCSRSDEECKFAHPPKSCQVENGRVIACFDSLKGRCSRENCKYLHPPTHLKTQLEINGRNNLIQQKTAAAMLAQQMQFMFPGTPLHPVPTFPVGPAIGTNTAISFAPYLAPVTPGVGLVPTEILPTTPVIVPGSPPVTVPGSTATQKLLRTDKLEVCREFQRGNCARGETDCRFAHPADSTMIDTSDNTVTVCMDYIKGRCMREKCKYFHPPAHLQAKIKAAQHQANQAAVAAQAAAAAATVMAFPPGALHPLPKRQALEKSNGTSAVFNPSVLHYQQALTSAQLQQHAAFIPTGSVLCMTPATSIDNSEIISRNGMECQESALRITKHCYCTYYPVSSSIELPQTAC</sequence>
<feature type="chain" id="PRO_0000274874" description="Muscleblind-like protein 2">
    <location>
        <begin position="1"/>
        <end position="373"/>
    </location>
</feature>
<feature type="zinc finger region" description="C3H1-type 1" evidence="4">
    <location>
        <begin position="13"/>
        <end position="41"/>
    </location>
</feature>
<feature type="zinc finger region" description="C3H1-type 2" evidence="4">
    <location>
        <begin position="47"/>
        <end position="73"/>
    </location>
</feature>
<feature type="zinc finger region" description="C3H1-type 3" evidence="4">
    <location>
        <begin position="176"/>
        <end position="204"/>
    </location>
</feature>
<feature type="zinc finger region" description="C3H1-type 4" evidence="4">
    <location>
        <begin position="212"/>
        <end position="238"/>
    </location>
</feature>
<feature type="splice variant" id="VSP_022892" description="In isoform 2 and isoform 3." evidence="5">
    <original>M</original>
    <variation>MTQSTAKAMKRPLEATVNL</variation>
    <location>
        <position position="268"/>
    </location>
</feature>
<feature type="splice variant" id="VSP_022893" description="In isoform 3." evidence="5">
    <location>
        <begin position="320"/>
        <end position="331"/>
    </location>
</feature>
<feature type="sequence conflict" description="In Ref. 1; CAH92332." evidence="6" ref="1">
    <original>W</original>
    <variation>G</variation>
    <location>
        <position position="13"/>
    </location>
</feature>
<feature type="sequence conflict" description="In Ref. 1; CAH90885." evidence="6" ref="1">
    <original>F</original>
    <variation>S</variation>
    <location>
        <position position="54"/>
    </location>
</feature>
<feature type="sequence conflict" description="In Ref. 1; CAH93361." evidence="6" ref="1">
    <original>I</original>
    <variation>V</variation>
    <location>
        <position position="155"/>
    </location>
</feature>
<feature type="sequence conflict" description="In Ref. 1; CAH90504." evidence="6" ref="1">
    <original>T</original>
    <variation>I</variation>
    <location>
        <position position="290"/>
    </location>
</feature>
<organism>
    <name type="scientific">Pongo abelii</name>
    <name type="common">Sumatran orangutan</name>
    <name type="synonym">Pongo pygmaeus abelii</name>
    <dbReference type="NCBI Taxonomy" id="9601"/>
    <lineage>
        <taxon>Eukaryota</taxon>
        <taxon>Metazoa</taxon>
        <taxon>Chordata</taxon>
        <taxon>Craniata</taxon>
        <taxon>Vertebrata</taxon>
        <taxon>Euteleostomi</taxon>
        <taxon>Mammalia</taxon>
        <taxon>Eutheria</taxon>
        <taxon>Euarchontoglires</taxon>
        <taxon>Primates</taxon>
        <taxon>Haplorrhini</taxon>
        <taxon>Catarrhini</taxon>
        <taxon>Hominidae</taxon>
        <taxon>Pongo</taxon>
    </lineage>
</organism>
<protein>
    <recommendedName>
        <fullName>Muscleblind-like protein 2</fullName>
    </recommendedName>
</protein>
<reference key="1">
    <citation type="submission" date="2004-11" db="EMBL/GenBank/DDBJ databases">
        <authorList>
            <consortium name="The German cDNA consortium"/>
        </authorList>
    </citation>
    <scope>NUCLEOTIDE SEQUENCE [LARGE SCALE MRNA] (ISOFORMS 1; 2 AND 3)</scope>
    <source>
        <tissue>Brain cortex</tissue>
        <tissue>Kidney</tissue>
    </source>
</reference>
<name>MBNL2_PONAB</name>
<comment type="function">
    <text evidence="1 2">Mediates pre-mRNA alternative splicing regulation. Acts either as activator or repressor of splicing on specific pre-mRNA targets. Inhibits cardiac troponin-T (TNNT2) pre-mRNA exon inclusion but induces insulin receptor (IR) pre-mRNA exon inclusion in muscle. Antagonizes the alternative splicing activity pattern of CELF proteins. RNA-binding protein that binds to 5'ACACCC-3' core sequence, termed zipcode, within the 3'UTR of ITGA3. Binds to CUG triplet repeat expansion in myotonic dystrophy muscle cells by sequestering the target RNAs. Together with RNA binding proteins RBPMS and RBFOX2, activates vascular smooth muscle cells alternative splicing events (By similarity). Regulates NCOR2 alternative splicing (By similarity). Seems to regulate expression and localization of ITGA3 by transporting it from the nucleus to cytoplasm at adhesion plaques. May play a role in myotonic dystrophy pathophysiology (DM) (By similarity).</text>
</comment>
<comment type="subunit">
    <text evidence="1">Interacts with ITGA3.</text>
</comment>
<comment type="subcellular location">
    <subcellularLocation>
        <location evidence="3">Nucleus</location>
    </subcellularLocation>
    <subcellularLocation>
        <location evidence="3">Cytoplasm</location>
    </subcellularLocation>
    <text evidence="3">Greater concentration in the nucleus. Expressed in or near large cytoplasmic adhesion plaques. Location in the cytoplasm is microtubule-dependent.</text>
</comment>
<comment type="alternative products">
    <event type="alternative splicing"/>
    <isoform>
        <id>Q5R4F5-1</id>
        <name>1</name>
        <sequence type="displayed"/>
    </isoform>
    <isoform>
        <id>Q5R4F5-2</id>
        <name>2</name>
        <sequence type="described" ref="VSP_022892"/>
    </isoform>
    <isoform>
        <id>Q5R4F5-3</id>
        <name>3</name>
        <sequence type="described" ref="VSP_022892 VSP_022893"/>
    </isoform>
</comment>
<comment type="similarity">
    <text evidence="6">Belongs to the muscleblind family.</text>
</comment>
<evidence type="ECO:0000250" key="1"/>
<evidence type="ECO:0000250" key="2">
    <source>
        <dbReference type="UniProtKB" id="F2Z3T4"/>
    </source>
</evidence>
<evidence type="ECO:0000250" key="3">
    <source>
        <dbReference type="UniProtKB" id="Q5VZF2"/>
    </source>
</evidence>
<evidence type="ECO:0000255" key="4">
    <source>
        <dbReference type="PROSITE-ProRule" id="PRU00723"/>
    </source>
</evidence>
<evidence type="ECO:0000303" key="5">
    <source ref="1"/>
</evidence>
<evidence type="ECO:0000305" key="6"/>
<accession>Q5R4F5</accession>
<accession>Q5R7C8</accession>
<accession>Q5RBH5</accession>
<accession>Q5RCK3</accession>
<gene>
    <name type="primary">MBNL2</name>
</gene>